<name>RMF_XENNA</name>
<accession>D3VC10</accession>
<feature type="chain" id="PRO_0000416485" description="Ribosome modulation factor">
    <location>
        <begin position="1"/>
        <end position="52"/>
    </location>
</feature>
<dbReference type="EMBL" id="FN667742">
    <property type="protein sequence ID" value="CBJ89663.1"/>
    <property type="molecule type" value="Genomic_DNA"/>
</dbReference>
<dbReference type="RefSeq" id="WP_013183942.1">
    <property type="nucleotide sequence ID" value="NC_014228.1"/>
</dbReference>
<dbReference type="SMR" id="D3VC10"/>
<dbReference type="STRING" id="406817.XNC1_1600"/>
<dbReference type="GeneID" id="94018671"/>
<dbReference type="KEGG" id="xne:XNC1_1600"/>
<dbReference type="eggNOG" id="COG3130">
    <property type="taxonomic scope" value="Bacteria"/>
</dbReference>
<dbReference type="HOGENOM" id="CLU_203350_0_0_6"/>
<dbReference type="Proteomes" id="UP000008075">
    <property type="component" value="Chromosome"/>
</dbReference>
<dbReference type="GO" id="GO:0005737">
    <property type="term" value="C:cytoplasm"/>
    <property type="evidence" value="ECO:0007669"/>
    <property type="project" value="UniProtKB-SubCell"/>
</dbReference>
<dbReference type="GO" id="GO:0006417">
    <property type="term" value="P:regulation of translation"/>
    <property type="evidence" value="ECO:0007669"/>
    <property type="project" value="UniProtKB-UniRule"/>
</dbReference>
<dbReference type="Gene3D" id="1.10.10.620">
    <property type="entry name" value="ribosome modulation factor like domain"/>
    <property type="match status" value="1"/>
</dbReference>
<dbReference type="HAMAP" id="MF_00919">
    <property type="entry name" value="RMF"/>
    <property type="match status" value="1"/>
</dbReference>
<dbReference type="InterPro" id="IPR007040">
    <property type="entry name" value="Ribosome_modulation_factor"/>
</dbReference>
<dbReference type="InterPro" id="IPR023200">
    <property type="entry name" value="RMF_sf"/>
</dbReference>
<dbReference type="NCBIfam" id="NF011162">
    <property type="entry name" value="PRK14563.1"/>
    <property type="match status" value="1"/>
</dbReference>
<dbReference type="NCBIfam" id="NF041886">
    <property type="entry name" value="Rmf_CrpP_fam"/>
    <property type="match status" value="1"/>
</dbReference>
<dbReference type="Pfam" id="PF04957">
    <property type="entry name" value="RMF"/>
    <property type="match status" value="1"/>
</dbReference>
<gene>
    <name evidence="1" type="primary">rmf</name>
    <name type="ordered locus">XNC1_1600</name>
</gene>
<comment type="function">
    <text evidence="1">During stationary phase, converts 70S ribosomes to an inactive dimeric form (100S ribosomes).</text>
</comment>
<comment type="subcellular location">
    <subcellularLocation>
        <location evidence="1">Cytoplasm</location>
    </subcellularLocation>
</comment>
<comment type="similarity">
    <text evidence="1">Belongs to the ribosome modulation factor family.</text>
</comment>
<protein>
    <recommendedName>
        <fullName evidence="1">Ribosome modulation factor</fullName>
        <shortName evidence="1">RMF</shortName>
    </recommendedName>
</protein>
<proteinExistence type="inferred from homology"/>
<reference key="1">
    <citation type="journal article" date="2011" name="PLoS ONE">
        <title>The entomopathogenic bacterial endosymbionts xenorhabdus and photorhabdus: convergent lifestyles from divergent genomes.</title>
        <authorList>
            <person name="Chaston J.M."/>
            <person name="Suen G."/>
            <person name="Tucker S.L."/>
            <person name="Andersen A.W."/>
            <person name="Bhasin A."/>
            <person name="Bode E."/>
            <person name="Bode H.B."/>
            <person name="Brachmann A.O."/>
            <person name="Cowles C.E."/>
            <person name="Cowles K.N."/>
            <person name="Darby C."/>
            <person name="de Leon L."/>
            <person name="Drace K."/>
            <person name="Du Z."/>
            <person name="Givaudan A."/>
            <person name="Herbert Tran E.E."/>
            <person name="Jewell K.A."/>
            <person name="Knack J.J."/>
            <person name="Krasomil-Osterfeld K.C."/>
            <person name="Kukor R."/>
            <person name="Lanois A."/>
            <person name="Latreille P."/>
            <person name="Leimgruber N.K."/>
            <person name="Lipke C.M."/>
            <person name="Liu R."/>
            <person name="Lu X."/>
            <person name="Martens E.C."/>
            <person name="Marri P.R."/>
            <person name="Medigue C."/>
            <person name="Menard M.L."/>
            <person name="Miller N.M."/>
            <person name="Morales-Soto N."/>
            <person name="Norton S."/>
            <person name="Ogier J.C."/>
            <person name="Orchard S.S."/>
            <person name="Park D."/>
            <person name="Park Y."/>
            <person name="Qurollo B.A."/>
            <person name="Sugar D.R."/>
            <person name="Richards G.R."/>
            <person name="Rouy Z."/>
            <person name="Slominski B."/>
            <person name="Slominski K."/>
            <person name="Snyder H."/>
            <person name="Tjaden B.C."/>
            <person name="van der Hoeven R."/>
            <person name="Welch R.D."/>
            <person name="Wheeler C."/>
            <person name="Xiang B."/>
            <person name="Barbazuk B."/>
            <person name="Gaudriault S."/>
            <person name="Goodner B."/>
            <person name="Slater S.C."/>
            <person name="Forst S."/>
            <person name="Goldman B.S."/>
            <person name="Goodrich-Blair H."/>
        </authorList>
    </citation>
    <scope>NUCLEOTIDE SEQUENCE [LARGE SCALE GENOMIC DNA]</scope>
    <source>
        <strain>ATCC 19061 / DSM 3370 / CCUG 14189 / LMG 1036 / NCIMB 9965 / AN6</strain>
    </source>
</reference>
<organism>
    <name type="scientific">Xenorhabdus nematophila (strain ATCC 19061 / DSM 3370 / CCUG 14189 / LMG 1036 / NCIMB 9965 / AN6)</name>
    <dbReference type="NCBI Taxonomy" id="406817"/>
    <lineage>
        <taxon>Bacteria</taxon>
        <taxon>Pseudomonadati</taxon>
        <taxon>Pseudomonadota</taxon>
        <taxon>Gammaproteobacteria</taxon>
        <taxon>Enterobacterales</taxon>
        <taxon>Morganellaceae</taxon>
        <taxon>Xenorhabdus</taxon>
    </lineage>
</organism>
<keyword id="KW-0963">Cytoplasm</keyword>
<keyword id="KW-1185">Reference proteome</keyword>
<keyword id="KW-0810">Translation regulation</keyword>
<evidence type="ECO:0000255" key="1">
    <source>
        <dbReference type="HAMAP-Rule" id="MF_00919"/>
    </source>
</evidence>
<sequence length="52" mass="6183">MKRQKRDRLARALSRGYHAGILGRPRENCPYHSLDARSYWLGGWRQAKEDRV</sequence>